<name>RL18_PORGI</name>
<evidence type="ECO:0000255" key="1">
    <source>
        <dbReference type="HAMAP-Rule" id="MF_01337"/>
    </source>
</evidence>
<evidence type="ECO:0000305" key="2"/>
<sequence>MVTKEQRRQKIKARVRGKISGTQEKPRLTVFRSNKQIYAQLIDDIAGRTLASASSLKLEMTGSKKEIAAKVGDEIAKAATEAGISTVVFDRNGYLFHGRIKELADAARKGGLKF</sequence>
<dbReference type="EMBL" id="AE015924">
    <property type="protein sequence ID" value="AAQ66903.1"/>
    <property type="molecule type" value="Genomic_DNA"/>
</dbReference>
<dbReference type="RefSeq" id="WP_005873883.1">
    <property type="nucleotide sequence ID" value="NC_002950.2"/>
</dbReference>
<dbReference type="SMR" id="Q7MTM9"/>
<dbReference type="STRING" id="242619.PG_1922"/>
<dbReference type="EnsemblBacteria" id="AAQ66903">
    <property type="protein sequence ID" value="AAQ66903"/>
    <property type="gene ID" value="PG_1922"/>
</dbReference>
<dbReference type="KEGG" id="pgi:PG_1922"/>
<dbReference type="PATRIC" id="fig|242619.8.peg.1776"/>
<dbReference type="eggNOG" id="COG0256">
    <property type="taxonomic scope" value="Bacteria"/>
</dbReference>
<dbReference type="HOGENOM" id="CLU_098841_0_1_10"/>
<dbReference type="BioCyc" id="PGIN242619:G1G02-1794-MONOMER"/>
<dbReference type="Proteomes" id="UP000000588">
    <property type="component" value="Chromosome"/>
</dbReference>
<dbReference type="GO" id="GO:0022625">
    <property type="term" value="C:cytosolic large ribosomal subunit"/>
    <property type="evidence" value="ECO:0007669"/>
    <property type="project" value="TreeGrafter"/>
</dbReference>
<dbReference type="GO" id="GO:0008097">
    <property type="term" value="F:5S rRNA binding"/>
    <property type="evidence" value="ECO:0007669"/>
    <property type="project" value="TreeGrafter"/>
</dbReference>
<dbReference type="GO" id="GO:0003735">
    <property type="term" value="F:structural constituent of ribosome"/>
    <property type="evidence" value="ECO:0007669"/>
    <property type="project" value="InterPro"/>
</dbReference>
<dbReference type="GO" id="GO:0006412">
    <property type="term" value="P:translation"/>
    <property type="evidence" value="ECO:0007669"/>
    <property type="project" value="UniProtKB-UniRule"/>
</dbReference>
<dbReference type="CDD" id="cd00432">
    <property type="entry name" value="Ribosomal_L18_L5e"/>
    <property type="match status" value="1"/>
</dbReference>
<dbReference type="FunFam" id="3.30.420.100:FF:000003">
    <property type="entry name" value="50S ribosomal protein L18"/>
    <property type="match status" value="1"/>
</dbReference>
<dbReference type="Gene3D" id="3.30.420.100">
    <property type="match status" value="1"/>
</dbReference>
<dbReference type="HAMAP" id="MF_01337_B">
    <property type="entry name" value="Ribosomal_uL18_B"/>
    <property type="match status" value="1"/>
</dbReference>
<dbReference type="InterPro" id="IPR004389">
    <property type="entry name" value="Ribosomal_uL18_bac-type"/>
</dbReference>
<dbReference type="InterPro" id="IPR005484">
    <property type="entry name" value="Ribosomal_uL18_bac/euk"/>
</dbReference>
<dbReference type="NCBIfam" id="TIGR00060">
    <property type="entry name" value="L18_bact"/>
    <property type="match status" value="1"/>
</dbReference>
<dbReference type="PANTHER" id="PTHR12899">
    <property type="entry name" value="39S RIBOSOMAL PROTEIN L18, MITOCHONDRIAL"/>
    <property type="match status" value="1"/>
</dbReference>
<dbReference type="PANTHER" id="PTHR12899:SF3">
    <property type="entry name" value="LARGE RIBOSOMAL SUBUNIT PROTEIN UL18M"/>
    <property type="match status" value="1"/>
</dbReference>
<dbReference type="Pfam" id="PF00861">
    <property type="entry name" value="Ribosomal_L18p"/>
    <property type="match status" value="1"/>
</dbReference>
<dbReference type="SUPFAM" id="SSF53137">
    <property type="entry name" value="Translational machinery components"/>
    <property type="match status" value="1"/>
</dbReference>
<gene>
    <name evidence="1" type="primary">rplR</name>
    <name type="ordered locus">PG_1922</name>
</gene>
<accession>Q7MTM9</accession>
<keyword id="KW-1185">Reference proteome</keyword>
<keyword id="KW-0687">Ribonucleoprotein</keyword>
<keyword id="KW-0689">Ribosomal protein</keyword>
<keyword id="KW-0694">RNA-binding</keyword>
<keyword id="KW-0699">rRNA-binding</keyword>
<proteinExistence type="inferred from homology"/>
<reference key="1">
    <citation type="journal article" date="2003" name="J. Bacteriol.">
        <title>Complete genome sequence of the oral pathogenic bacterium Porphyromonas gingivalis strain W83.</title>
        <authorList>
            <person name="Nelson K.E."/>
            <person name="Fleischmann R.D."/>
            <person name="DeBoy R.T."/>
            <person name="Paulsen I.T."/>
            <person name="Fouts D.E."/>
            <person name="Eisen J.A."/>
            <person name="Daugherty S.C."/>
            <person name="Dodson R.J."/>
            <person name="Durkin A.S."/>
            <person name="Gwinn M.L."/>
            <person name="Haft D.H."/>
            <person name="Kolonay J.F."/>
            <person name="Nelson W.C."/>
            <person name="Mason T.M."/>
            <person name="Tallon L."/>
            <person name="Gray J."/>
            <person name="Granger D."/>
            <person name="Tettelin H."/>
            <person name="Dong H."/>
            <person name="Galvin J.L."/>
            <person name="Duncan M.J."/>
            <person name="Dewhirst F.E."/>
            <person name="Fraser C.M."/>
        </authorList>
    </citation>
    <scope>NUCLEOTIDE SEQUENCE [LARGE SCALE GENOMIC DNA]</scope>
    <source>
        <strain>ATCC BAA-308 / W83</strain>
    </source>
</reference>
<comment type="function">
    <text evidence="1">This is one of the proteins that bind and probably mediate the attachment of the 5S RNA into the large ribosomal subunit, where it forms part of the central protuberance.</text>
</comment>
<comment type="subunit">
    <text evidence="1">Part of the 50S ribosomal subunit; part of the 5S rRNA/L5/L18/L25 subcomplex. Contacts the 5S and 23S rRNAs.</text>
</comment>
<comment type="similarity">
    <text evidence="1">Belongs to the universal ribosomal protein uL18 family.</text>
</comment>
<organism>
    <name type="scientific">Porphyromonas gingivalis (strain ATCC BAA-308 / W83)</name>
    <dbReference type="NCBI Taxonomy" id="242619"/>
    <lineage>
        <taxon>Bacteria</taxon>
        <taxon>Pseudomonadati</taxon>
        <taxon>Bacteroidota</taxon>
        <taxon>Bacteroidia</taxon>
        <taxon>Bacteroidales</taxon>
        <taxon>Porphyromonadaceae</taxon>
        <taxon>Porphyromonas</taxon>
    </lineage>
</organism>
<feature type="chain" id="PRO_0000131317" description="Large ribosomal subunit protein uL18">
    <location>
        <begin position="1"/>
        <end position="114"/>
    </location>
</feature>
<protein>
    <recommendedName>
        <fullName evidence="1">Large ribosomal subunit protein uL18</fullName>
    </recommendedName>
    <alternativeName>
        <fullName evidence="2">50S ribosomal protein L18</fullName>
    </alternativeName>
</protein>